<accession>Q08647</accession>
<accession>D6W2U5</accession>
<sequence length="676" mass="77002">MSDSSEATVKRPLDAHVGPSENAAKKLKIEQRTQADGIHEADVGITLFLSPELPGFRGQIKQRYTDFLVNEIDQEGKVIHLTDKGFKMPKKPQRSKEEVNAEKESEAARRQEFNVDPELRNQLVEIFGEEDVLKIESVYRTANKMETAKNFEDKSVRTKIHQLLREAFKNELESVTTDTNTFKIARSNRNSRTNKQEKINQTRDANGVENWGYGPSKDFIHFTLHKENKDTMEAVNVITKLLRVPSRVIRYAGTKDRRAVTCQRVSISKIGLDRLNALNRTLKGMIIGNYNFSDASLNLGDLKGNEFVVVIRDVTTGNSEVSLEEIVSNGCKSLSENGFINYFGMQRFGTFSISTHTIGRELLLSNWKKAAELILSDQDNVLPKSKEARKIWAETKDAALALKQMPRQCLAENALLYSLSNQRKEEDGTYSENAYYTAIMKIPRNLRTMYVHAYQSYVWNSIASKRIELHGLKLVVGDLVIDTSEKSPLISGIDDEDFDEDVREAQFIRAKAVTQEDIDSVKYTMEDVVLPSPGFDVLYPSNEELKQLYVDILKADNMDPFNMRRKVRDFSLAGSYRTVIQKPKSLEYRIIHYDDPSQQLVNTDLDILNNTRAKESGQKYMKAKLDRYMPDKGGEKTAVVLKFQLGTSAYATMALRELMKLETSRRGDMCDVKENI</sequence>
<proteinExistence type="evidence at protein level"/>
<keyword id="KW-0002">3D-structure</keyword>
<keyword id="KW-0007">Acetylation</keyword>
<keyword id="KW-0963">Cytoplasm</keyword>
<keyword id="KW-0413">Isomerase</keyword>
<keyword id="KW-0507">mRNA processing</keyword>
<keyword id="KW-0508">mRNA splicing</keyword>
<keyword id="KW-0539">Nucleus</keyword>
<keyword id="KW-1185">Reference proteome</keyword>
<keyword id="KW-0690">Ribosome biogenesis</keyword>
<keyword id="KW-0698">rRNA processing</keyword>
<keyword id="KW-0819">tRNA processing</keyword>
<gene>
    <name evidence="15 19" type="primary">PUS7</name>
    <name type="ordered locus">YOR243C</name>
    <name type="ORF">O5254</name>
</gene>
<protein>
    <recommendedName>
        <fullName>Multisubstrate pseudouridine synthase 7</fullName>
        <ecNumber evidence="5 13 14">5.4.99.-</ecNumber>
        <ecNumber evidence="5 13 14">5.4.99.27</ecNumber>
    </recommendedName>
    <alternativeName>
        <fullName>RNA pseudouridylate synthase 7</fullName>
    </alternativeName>
    <alternativeName>
        <fullName>RNA-uridine isomerase 7</fullName>
    </alternativeName>
    <alternativeName>
        <fullName>tRNA pseudouridine(13) synthase</fullName>
    </alternativeName>
</protein>
<evidence type="ECO:0000255" key="1">
    <source>
        <dbReference type="PROSITE-ProRule" id="PRU00342"/>
    </source>
</evidence>
<evidence type="ECO:0000256" key="2">
    <source>
        <dbReference type="SAM" id="MobiDB-lite"/>
    </source>
</evidence>
<evidence type="ECO:0000269" key="3">
    <source>
    </source>
</evidence>
<evidence type="ECO:0000269" key="4">
    <source>
    </source>
</evidence>
<evidence type="ECO:0000269" key="5">
    <source>
    </source>
</evidence>
<evidence type="ECO:0000269" key="6">
    <source>
    </source>
</evidence>
<evidence type="ECO:0000269" key="7">
    <source>
    </source>
</evidence>
<evidence type="ECO:0000269" key="8">
    <source>
    </source>
</evidence>
<evidence type="ECO:0000269" key="9">
    <source>
    </source>
</evidence>
<evidence type="ECO:0000269" key="10">
    <source>
    </source>
</evidence>
<evidence type="ECO:0000269" key="11">
    <source>
    </source>
</evidence>
<evidence type="ECO:0000269" key="12">
    <source>
    </source>
</evidence>
<evidence type="ECO:0000269" key="13">
    <source>
    </source>
</evidence>
<evidence type="ECO:0000269" key="14">
    <source>
    </source>
</evidence>
<evidence type="ECO:0000303" key="15">
    <source>
    </source>
</evidence>
<evidence type="ECO:0000305" key="16"/>
<evidence type="ECO:0000305" key="17">
    <source>
    </source>
</evidence>
<evidence type="ECO:0000305" key="18">
    <source>
    </source>
</evidence>
<evidence type="ECO:0000312" key="19">
    <source>
        <dbReference type="SGD" id="S000005769"/>
    </source>
</evidence>
<evidence type="ECO:0007744" key="20">
    <source>
    </source>
</evidence>
<evidence type="ECO:0007829" key="21">
    <source>
        <dbReference type="PDB" id="7MZV"/>
    </source>
</evidence>
<comment type="function">
    <text evidence="3 4 5 8 9 10 11 12 13 14">Catalyzes pseudouridylation at position 35 in U2 snRNA stem-loop II region which induces particular conformation of the mRNA-U2 snRNA duplex and places the nucleophile in an accessible position for the first step of splicing (PubMed:12426583, PubMed:12682021, PubMed:15611063, PubMed:18435545, PubMed:19114708, PubMed:25219674). Also catalyzes pseudouridylation at position 56 in U2 snRNA (PubMed:21131909). Also catalyzes pseudouridylation at position 50 in 5S rRNA, position 13 in cytoplasmic tRNAs, and position 35 in pre-tRNA(Tyr) (PubMed:14561887, PubMed:18332121, PubMed:25219674, PubMed:35058356). Pseudouridine residues in tRNAs may stabilize the local RNA conformation, favor interactions with protein partners and play an important role in the stabilization of the codon-anticodon interaction with mRNA (PubMed:14561887). Also catalyzes pseudouridylation of mRNAs in response to heat shock: mediates pseudouridylation of mRNAs with the consensus sequence 5'-UGUAR-3' (PubMed:25219674, PubMed:35058356).</text>
</comment>
<comment type="catalytic activity">
    <reaction evidence="5">
        <text>uridine in 5S rRNA = pseudouridine in 5S rRNA</text>
        <dbReference type="Rhea" id="RHEA:47036"/>
        <dbReference type="Rhea" id="RHEA-COMP:11730"/>
        <dbReference type="Rhea" id="RHEA-COMP:11731"/>
        <dbReference type="ChEBI" id="CHEBI:65314"/>
        <dbReference type="ChEBI" id="CHEBI:65315"/>
    </reaction>
</comment>
<comment type="catalytic activity">
    <reaction evidence="5 12 13">
        <text>uridine in snRNA = pseudouridine in snRNA</text>
        <dbReference type="Rhea" id="RHEA:51124"/>
        <dbReference type="Rhea" id="RHEA-COMP:12891"/>
        <dbReference type="Rhea" id="RHEA-COMP:12892"/>
        <dbReference type="ChEBI" id="CHEBI:65314"/>
        <dbReference type="ChEBI" id="CHEBI:65315"/>
    </reaction>
</comment>
<comment type="catalytic activity">
    <reaction evidence="5 13 14">
        <text>uridine(13) in tRNA = pseudouridine(13) in tRNA</text>
        <dbReference type="Rhea" id="RHEA:42540"/>
        <dbReference type="Rhea" id="RHEA-COMP:10105"/>
        <dbReference type="Rhea" id="RHEA-COMP:10106"/>
        <dbReference type="ChEBI" id="CHEBI:65314"/>
        <dbReference type="ChEBI" id="CHEBI:65315"/>
        <dbReference type="EC" id="5.4.99.27"/>
    </reaction>
</comment>
<comment type="catalytic activity">
    <reaction evidence="13 14">
        <text>a uridine in mRNA = a pseudouridine in mRNA</text>
        <dbReference type="Rhea" id="RHEA:56644"/>
        <dbReference type="Rhea" id="RHEA-COMP:14658"/>
        <dbReference type="Rhea" id="RHEA-COMP:14659"/>
        <dbReference type="ChEBI" id="CHEBI:65314"/>
        <dbReference type="ChEBI" id="CHEBI:65315"/>
    </reaction>
</comment>
<comment type="subcellular location">
    <subcellularLocation>
        <location evidence="6 13">Nucleus</location>
    </subcellularLocation>
    <subcellularLocation>
        <location evidence="13">Cytoplasm</location>
    </subcellularLocation>
    <text evidence="13">Predominantly nuclear in 30 degrees Celsius and primarily cytoplasmic in heat shock.</text>
</comment>
<comment type="disruption phenotype">
    <text evidence="13">Decreased level of pseudouridylated mRNAs.</text>
</comment>
<comment type="miscellaneous">
    <text evidence="7">Present with 4150 molecules/cell in log phase SD medium.</text>
</comment>
<comment type="similarity">
    <text evidence="16">Belongs to the pseudouridine synthase TruD family.</text>
</comment>
<organism>
    <name type="scientific">Saccharomyces cerevisiae (strain ATCC 204508 / S288c)</name>
    <name type="common">Baker's yeast</name>
    <dbReference type="NCBI Taxonomy" id="559292"/>
    <lineage>
        <taxon>Eukaryota</taxon>
        <taxon>Fungi</taxon>
        <taxon>Dikarya</taxon>
        <taxon>Ascomycota</taxon>
        <taxon>Saccharomycotina</taxon>
        <taxon>Saccharomycetes</taxon>
        <taxon>Saccharomycetales</taxon>
        <taxon>Saccharomycetaceae</taxon>
        <taxon>Saccharomyces</taxon>
    </lineage>
</organism>
<dbReference type="EC" id="5.4.99.-" evidence="5 13 14"/>
<dbReference type="EC" id="5.4.99.27" evidence="5 13 14"/>
<dbReference type="EMBL" id="Z75151">
    <property type="protein sequence ID" value="CAA99464.1"/>
    <property type="molecule type" value="Genomic_DNA"/>
</dbReference>
<dbReference type="EMBL" id="BK006948">
    <property type="protein sequence ID" value="DAA11011.1"/>
    <property type="molecule type" value="Genomic_DNA"/>
</dbReference>
<dbReference type="PIR" id="S67136">
    <property type="entry name" value="S67136"/>
</dbReference>
<dbReference type="RefSeq" id="NP_014886.1">
    <property type="nucleotide sequence ID" value="NM_001183662.1"/>
</dbReference>
<dbReference type="PDB" id="7MZV">
    <property type="method" value="X-ray"/>
    <property type="resolution" value="3.20 A"/>
    <property type="chains" value="A=1-676"/>
</dbReference>
<dbReference type="PDBsum" id="7MZV"/>
<dbReference type="SMR" id="Q08647"/>
<dbReference type="BioGRID" id="34634">
    <property type="interactions" value="183"/>
</dbReference>
<dbReference type="DIP" id="DIP-6762N"/>
<dbReference type="FunCoup" id="Q08647">
    <property type="interactions" value="1393"/>
</dbReference>
<dbReference type="IntAct" id="Q08647">
    <property type="interactions" value="12"/>
</dbReference>
<dbReference type="MINT" id="Q08647"/>
<dbReference type="STRING" id="4932.YOR243C"/>
<dbReference type="iPTMnet" id="Q08647"/>
<dbReference type="PaxDb" id="4932-YOR243C"/>
<dbReference type="PeptideAtlas" id="Q08647"/>
<dbReference type="TopDownProteomics" id="Q08647"/>
<dbReference type="EnsemblFungi" id="YOR243C_mRNA">
    <property type="protein sequence ID" value="YOR243C"/>
    <property type="gene ID" value="YOR243C"/>
</dbReference>
<dbReference type="GeneID" id="854417"/>
<dbReference type="KEGG" id="sce:YOR243C"/>
<dbReference type="AGR" id="SGD:S000005769"/>
<dbReference type="SGD" id="S000005769">
    <property type="gene designation" value="PUS7"/>
</dbReference>
<dbReference type="VEuPathDB" id="FungiDB:YOR243C"/>
<dbReference type="eggNOG" id="KOG2339">
    <property type="taxonomic scope" value="Eukaryota"/>
</dbReference>
<dbReference type="GeneTree" id="ENSGT00530000063554"/>
<dbReference type="HOGENOM" id="CLU_005281_0_2_1"/>
<dbReference type="InParanoid" id="Q08647"/>
<dbReference type="OMA" id="WINYFGH"/>
<dbReference type="OrthoDB" id="447290at2759"/>
<dbReference type="BioCyc" id="MetaCyc:G3O-33737-MONOMER"/>
<dbReference type="BioCyc" id="YEAST:G3O-33737-MONOMER"/>
<dbReference type="BRENDA" id="5.4.99.27">
    <property type="organism ID" value="984"/>
</dbReference>
<dbReference type="BRENDA" id="5.4.99.B22">
    <property type="organism ID" value="984"/>
</dbReference>
<dbReference type="BioGRID-ORCS" id="854417">
    <property type="hits" value="0 hits in 10 CRISPR screens"/>
</dbReference>
<dbReference type="PRO" id="PR:Q08647"/>
<dbReference type="Proteomes" id="UP000002311">
    <property type="component" value="Chromosome XV"/>
</dbReference>
<dbReference type="RNAct" id="Q08647">
    <property type="molecule type" value="protein"/>
</dbReference>
<dbReference type="GO" id="GO:0031429">
    <property type="term" value="C:box H/ACA snoRNP complex"/>
    <property type="evidence" value="ECO:0000314"/>
    <property type="project" value="UniProtKB"/>
</dbReference>
<dbReference type="GO" id="GO:0005737">
    <property type="term" value="C:cytoplasm"/>
    <property type="evidence" value="ECO:0000314"/>
    <property type="project" value="SGD"/>
</dbReference>
<dbReference type="GO" id="GO:0005654">
    <property type="term" value="C:nucleoplasm"/>
    <property type="evidence" value="ECO:0000304"/>
    <property type="project" value="Reactome"/>
</dbReference>
<dbReference type="GO" id="GO:0005634">
    <property type="term" value="C:nucleus"/>
    <property type="evidence" value="ECO:0000314"/>
    <property type="project" value="SGD"/>
</dbReference>
<dbReference type="GO" id="GO:0009982">
    <property type="term" value="F:pseudouridine synthase activity"/>
    <property type="evidence" value="ECO:0000314"/>
    <property type="project" value="UniProtKB"/>
</dbReference>
<dbReference type="GO" id="GO:0003723">
    <property type="term" value="F:RNA binding"/>
    <property type="evidence" value="ECO:0007669"/>
    <property type="project" value="InterPro"/>
</dbReference>
<dbReference type="GO" id="GO:0106032">
    <property type="term" value="F:snRNA pseudouridine synthase activity"/>
    <property type="evidence" value="ECO:0007669"/>
    <property type="project" value="RHEA"/>
</dbReference>
<dbReference type="GO" id="GO:0160150">
    <property type="term" value="F:tRNA pseudouridine(13) synthase activity"/>
    <property type="evidence" value="ECO:0007669"/>
    <property type="project" value="UniProtKB-EC"/>
</dbReference>
<dbReference type="GO" id="GO:0000455">
    <property type="term" value="P:enzyme-directed rRNA pseudouridine synthesis"/>
    <property type="evidence" value="ECO:0000315"/>
    <property type="project" value="SGD"/>
</dbReference>
<dbReference type="GO" id="GO:0006397">
    <property type="term" value="P:mRNA processing"/>
    <property type="evidence" value="ECO:0007669"/>
    <property type="project" value="UniProtKB-KW"/>
</dbReference>
<dbReference type="GO" id="GO:1990481">
    <property type="term" value="P:mRNA pseudouridine synthesis"/>
    <property type="evidence" value="ECO:0000314"/>
    <property type="project" value="UniProtKB"/>
</dbReference>
<dbReference type="GO" id="GO:0001522">
    <property type="term" value="P:pseudouridine synthesis"/>
    <property type="evidence" value="ECO:0000318"/>
    <property type="project" value="GO_Central"/>
</dbReference>
<dbReference type="GO" id="GO:0008380">
    <property type="term" value="P:RNA splicing"/>
    <property type="evidence" value="ECO:0007669"/>
    <property type="project" value="UniProtKB-KW"/>
</dbReference>
<dbReference type="GO" id="GO:0031120">
    <property type="term" value="P:snRNA pseudouridine synthesis"/>
    <property type="evidence" value="ECO:0000314"/>
    <property type="project" value="UniProtKB"/>
</dbReference>
<dbReference type="GO" id="GO:0006400">
    <property type="term" value="P:tRNA modification"/>
    <property type="evidence" value="ECO:0000304"/>
    <property type="project" value="Reactome"/>
</dbReference>
<dbReference type="GO" id="GO:0031119">
    <property type="term" value="P:tRNA pseudouridine synthesis"/>
    <property type="evidence" value="ECO:0000314"/>
    <property type="project" value="UniProtKB"/>
</dbReference>
<dbReference type="CDD" id="cd02576">
    <property type="entry name" value="PseudoU_synth_ScPUS7"/>
    <property type="match status" value="1"/>
</dbReference>
<dbReference type="FunFam" id="3.30.2350.20:FF:000011">
    <property type="entry name" value="Pseudouridine synthase"/>
    <property type="match status" value="1"/>
</dbReference>
<dbReference type="Gene3D" id="3.30.2350.20">
    <property type="entry name" value="TruD, catalytic domain"/>
    <property type="match status" value="2"/>
</dbReference>
<dbReference type="InterPro" id="IPR020103">
    <property type="entry name" value="PsdUridine_synth_cat_dom_sf"/>
</dbReference>
<dbReference type="InterPro" id="IPR001656">
    <property type="entry name" value="PsdUridine_synth_TruD"/>
</dbReference>
<dbReference type="InterPro" id="IPR020119">
    <property type="entry name" value="PsdUridine_synth_TruD_CS"/>
</dbReference>
<dbReference type="InterPro" id="IPR011760">
    <property type="entry name" value="PsdUridine_synth_TruD_insert"/>
</dbReference>
<dbReference type="InterPro" id="IPR042214">
    <property type="entry name" value="TruD_catalytic"/>
</dbReference>
<dbReference type="NCBIfam" id="TIGR00094">
    <property type="entry name" value="tRNA_TruD_broad"/>
    <property type="match status" value="1"/>
</dbReference>
<dbReference type="PANTHER" id="PTHR13326:SF21">
    <property type="entry name" value="PSEUDOURIDYLATE SYNTHASE PUS7L"/>
    <property type="match status" value="1"/>
</dbReference>
<dbReference type="PANTHER" id="PTHR13326">
    <property type="entry name" value="TRNA PSEUDOURIDINE SYNTHASE D"/>
    <property type="match status" value="1"/>
</dbReference>
<dbReference type="Pfam" id="PF01142">
    <property type="entry name" value="TruD"/>
    <property type="match status" value="1"/>
</dbReference>
<dbReference type="PIRSF" id="PIRSF037016">
    <property type="entry name" value="Pseudouridin_synth_euk_prd"/>
    <property type="match status" value="1"/>
</dbReference>
<dbReference type="SUPFAM" id="SSF55120">
    <property type="entry name" value="Pseudouridine synthase"/>
    <property type="match status" value="1"/>
</dbReference>
<dbReference type="PROSITE" id="PS50984">
    <property type="entry name" value="TRUD"/>
    <property type="match status" value="1"/>
</dbReference>
<dbReference type="PROSITE" id="PS01268">
    <property type="entry name" value="UPF0024"/>
    <property type="match status" value="1"/>
</dbReference>
<name>PUS7_YEAST</name>
<reference key="1">
    <citation type="journal article" date="1996" name="Yeast">
        <title>Sequence and analysis of a 26.9 kb fragment from chromosome XV of the yeast Saccharomyces cerevisiae.</title>
        <authorList>
            <person name="Boyer J."/>
            <person name="Michaux G."/>
            <person name="Fairhead C."/>
            <person name="Gaillon L."/>
            <person name="Dujon B."/>
        </authorList>
    </citation>
    <scope>NUCLEOTIDE SEQUENCE [GENOMIC DNA]</scope>
    <source>
        <strain>ATCC 96604 / S288c / FY1679</strain>
    </source>
</reference>
<reference key="2">
    <citation type="journal article" date="1997" name="Nature">
        <title>The nucleotide sequence of Saccharomyces cerevisiae chromosome XV.</title>
        <authorList>
            <person name="Dujon B."/>
            <person name="Albermann K."/>
            <person name="Aldea M."/>
            <person name="Alexandraki D."/>
            <person name="Ansorge W."/>
            <person name="Arino J."/>
            <person name="Benes V."/>
            <person name="Bohn C."/>
            <person name="Bolotin-Fukuhara M."/>
            <person name="Bordonne R."/>
            <person name="Boyer J."/>
            <person name="Camasses A."/>
            <person name="Casamayor A."/>
            <person name="Casas C."/>
            <person name="Cheret G."/>
            <person name="Cziepluch C."/>
            <person name="Daignan-Fornier B."/>
            <person name="Dang V.-D."/>
            <person name="de Haan M."/>
            <person name="Delius H."/>
            <person name="Durand P."/>
            <person name="Fairhead C."/>
            <person name="Feldmann H."/>
            <person name="Gaillon L."/>
            <person name="Galisson F."/>
            <person name="Gamo F.-J."/>
            <person name="Gancedo C."/>
            <person name="Goffeau A."/>
            <person name="Goulding S.E."/>
            <person name="Grivell L.A."/>
            <person name="Habbig B."/>
            <person name="Hand N.J."/>
            <person name="Hani J."/>
            <person name="Hattenhorst U."/>
            <person name="Hebling U."/>
            <person name="Hernando Y."/>
            <person name="Herrero E."/>
            <person name="Heumann K."/>
            <person name="Hiesel R."/>
            <person name="Hilger F."/>
            <person name="Hofmann B."/>
            <person name="Hollenberg C.P."/>
            <person name="Hughes B."/>
            <person name="Jauniaux J.-C."/>
            <person name="Kalogeropoulos A."/>
            <person name="Katsoulou C."/>
            <person name="Kordes E."/>
            <person name="Lafuente M.J."/>
            <person name="Landt O."/>
            <person name="Louis E.J."/>
            <person name="Maarse A.C."/>
            <person name="Madania A."/>
            <person name="Mannhaupt G."/>
            <person name="Marck C."/>
            <person name="Martin R.P."/>
            <person name="Mewes H.-W."/>
            <person name="Michaux G."/>
            <person name="Paces V."/>
            <person name="Parle-McDermott A.G."/>
            <person name="Pearson B.M."/>
            <person name="Perrin A."/>
            <person name="Pettersson B."/>
            <person name="Poch O."/>
            <person name="Pohl T.M."/>
            <person name="Poirey R."/>
            <person name="Portetelle D."/>
            <person name="Pujol A."/>
            <person name="Purnelle B."/>
            <person name="Ramezani Rad M."/>
            <person name="Rechmann S."/>
            <person name="Schwager C."/>
            <person name="Schweizer M."/>
            <person name="Sor F."/>
            <person name="Sterky F."/>
            <person name="Tarassov I.A."/>
            <person name="Teodoru C."/>
            <person name="Tettelin H."/>
            <person name="Thierry A."/>
            <person name="Tobiasch E."/>
            <person name="Tzermia M."/>
            <person name="Uhlen M."/>
            <person name="Unseld M."/>
            <person name="Valens M."/>
            <person name="Vandenbol M."/>
            <person name="Vetter I."/>
            <person name="Vlcek C."/>
            <person name="Voet M."/>
            <person name="Volckaert G."/>
            <person name="Voss H."/>
            <person name="Wambutt R."/>
            <person name="Wedler H."/>
            <person name="Wiemann S."/>
            <person name="Winsor B."/>
            <person name="Wolfe K.H."/>
            <person name="Zollner A."/>
            <person name="Zumstein E."/>
            <person name="Kleine K."/>
        </authorList>
    </citation>
    <scope>NUCLEOTIDE SEQUENCE [LARGE SCALE GENOMIC DNA]</scope>
    <source>
        <strain>ATCC 204508 / S288c</strain>
    </source>
</reference>
<reference key="3">
    <citation type="journal article" date="2014" name="G3 (Bethesda)">
        <title>The reference genome sequence of Saccharomyces cerevisiae: Then and now.</title>
        <authorList>
            <person name="Engel S.R."/>
            <person name="Dietrich F.S."/>
            <person name="Fisk D.G."/>
            <person name="Binkley G."/>
            <person name="Balakrishnan R."/>
            <person name="Costanzo M.C."/>
            <person name="Dwight S.S."/>
            <person name="Hitz B.C."/>
            <person name="Karra K."/>
            <person name="Nash R.S."/>
            <person name="Weng S."/>
            <person name="Wong E.D."/>
            <person name="Lloyd P."/>
            <person name="Skrzypek M.S."/>
            <person name="Miyasato S.R."/>
            <person name="Simison M."/>
            <person name="Cherry J.M."/>
        </authorList>
    </citation>
    <scope>GENOME REANNOTATION</scope>
    <source>
        <strain>ATCC 204508 / S288c</strain>
    </source>
</reference>
<reference key="4">
    <citation type="journal article" date="2002" name="Nat. Struct. Biol.">
        <title>Sculpting of the spliceosomal branch site recognition motif by a conserved pseudouridine.</title>
        <authorList>
            <person name="Newby M.I."/>
            <person name="Greenbaum N.L."/>
        </authorList>
    </citation>
    <scope>FUNCTION</scope>
</reference>
<reference key="5">
    <citation type="journal article" date="2003" name="EMBO J.">
        <title>Pseudouridylation (Psi) of U2 snRNA in S. cerevisiae is catalyzed by an RNA-independent mechanism.</title>
        <authorList>
            <person name="Ma X."/>
            <person name="Zhao X."/>
            <person name="Yu Y.T."/>
        </authorList>
    </citation>
    <scope>FUNCTION</scope>
</reference>
<reference key="6">
    <citation type="journal article" date="2003" name="Nature">
        <title>Global analysis of protein localization in budding yeast.</title>
        <authorList>
            <person name="Huh W.-K."/>
            <person name="Falvo J.V."/>
            <person name="Gerke L.C."/>
            <person name="Carroll A.S."/>
            <person name="Howson R.W."/>
            <person name="Weissman J.S."/>
            <person name="O'Shea E.K."/>
        </authorList>
    </citation>
    <scope>SUBCELLULAR LOCATION [LARGE SCALE ANALYSIS]</scope>
</reference>
<reference key="7">
    <citation type="journal article" date="2003" name="Nature">
        <title>Global analysis of protein expression in yeast.</title>
        <authorList>
            <person name="Ghaemmaghami S."/>
            <person name="Huh W.-K."/>
            <person name="Bower K."/>
            <person name="Howson R.W."/>
            <person name="Belle A."/>
            <person name="Dephoure N."/>
            <person name="O'Shea E.K."/>
            <person name="Weissman J.S."/>
        </authorList>
    </citation>
    <scope>LEVEL OF PROTEIN EXPRESSION [LARGE SCALE ANALYSIS]</scope>
</reference>
<reference key="8">
    <citation type="journal article" date="2003" name="RNA">
        <title>The Saccharomyces cerevisiae U2 snRNA:pseudouridine-synthase Pus7p is a novel multisite-multisubstrate RNA:Psi-synthase also acting on tRNAs.</title>
        <authorList>
            <person name="Behm-Ansmant I."/>
            <person name="Urban A."/>
            <person name="Ma X."/>
            <person name="Yu Y.T."/>
            <person name="Motorin Y."/>
            <person name="Branlant C."/>
        </authorList>
    </citation>
    <scope>FUNCTION</scope>
    <scope>CATALYTIC ACTIVITY</scope>
    <scope>ACTIVE SITE</scope>
    <scope>MUTAGENESIS OF ASP-256</scope>
</reference>
<reference key="9">
    <citation type="journal article" date="2005" name="J. Biol. Chem.">
        <title>Psi35 in the branch site recognition region of U2 small nuclear RNA is important for pre-mRNA splicing in Saccharomyces cerevisiae.</title>
        <authorList>
            <person name="Yang C."/>
            <person name="McPheeters D.S."/>
            <person name="Yu Y.T."/>
        </authorList>
    </citation>
    <scope>FUNCTION</scope>
</reference>
<reference key="10">
    <citation type="journal article" date="2008" name="Biochemistry">
        <title>X-ray structures of U2 snRNA-branchpoint duplexes containing conserved pseudouridines.</title>
        <authorList>
            <person name="Lin Y."/>
            <person name="Kielkopf C.L."/>
        </authorList>
    </citation>
    <scope>FUNCTION</scope>
</reference>
<reference key="11">
    <citation type="journal article" date="2008" name="Mol. Cell. Biol.">
        <title>Different mechanisms for pseudouridine formation in yeast 5S and 5.8S rRNAs.</title>
        <authorList>
            <person name="Decatur W.A."/>
            <person name="Schnare M.N."/>
        </authorList>
    </citation>
    <scope>FUNCTION</scope>
</reference>
<reference key="12">
    <citation type="journal article" date="2009" name="J. Biol. Chem.">
        <title>RNA sequence and two-dimensional structure features required for efficient substrate modification by the Saccharomyces cerevisiae RNA:{Psi}-synthase Pus7p.</title>
        <authorList>
            <person name="Urban A."/>
            <person name="Behm-Ansmant I."/>
            <person name="Branlant C."/>
            <person name="Motorin Y."/>
        </authorList>
    </citation>
    <scope>FUNCTION</scope>
</reference>
<reference key="13">
    <citation type="journal article" date="2012" name="Proc. Natl. Acad. Sci. U.S.A.">
        <title>N-terminal acetylome analyses and functional insights of the N-terminal acetyltransferase NatB.</title>
        <authorList>
            <person name="Van Damme P."/>
            <person name="Lasa M."/>
            <person name="Polevoda B."/>
            <person name="Gazquez C."/>
            <person name="Elosegui-Artola A."/>
            <person name="Kim D.S."/>
            <person name="De Juan-Pardo E."/>
            <person name="Demeyer K."/>
            <person name="Hole K."/>
            <person name="Larrea E."/>
            <person name="Timmerman E."/>
            <person name="Prieto J."/>
            <person name="Arnesen T."/>
            <person name="Sherman F."/>
            <person name="Gevaert K."/>
            <person name="Aldabe R."/>
        </authorList>
    </citation>
    <scope>ACETYLATION [LARGE SCALE ANALYSIS] AT SER-2</scope>
    <scope>CLEAVAGE OF INITIATOR METHIONINE [LARGE SCALE ANALYSIS]</scope>
    <scope>IDENTIFICATION BY MASS SPECTROMETRY [LARGE SCALE ANALYSIS]</scope>
</reference>
<reference key="14">
    <citation type="journal article" date="2011" name="EMBO J.">
        <title>U2 snRNA is inducibly pseudouridylated at novel sites by Pus7p and snR81 RNP.</title>
        <authorList>
            <person name="Wu G."/>
            <person name="Xiao M."/>
            <person name="Yang C."/>
            <person name="Yu Y.T."/>
        </authorList>
    </citation>
    <scope>FUNCTION</scope>
    <scope>CATALYTIC ACTIVITY</scope>
</reference>
<reference key="15">
    <citation type="journal article" date="2014" name="Cell">
        <title>Transcriptome-wide mapping reveals widespread dynamic-regulated pseudouridylation of ncRNA and mRNA.</title>
        <authorList>
            <person name="Schwartz S."/>
            <person name="Bernstein D.A."/>
            <person name="Mumbach M.R."/>
            <person name="Jovanovic M."/>
            <person name="Herbst R.H."/>
            <person name="Leon-Ricardo B.X."/>
            <person name="Engreitz J.M."/>
            <person name="Guttman M."/>
            <person name="Satija R."/>
            <person name="Lander E.S."/>
            <person name="Fink G."/>
            <person name="Regev A."/>
        </authorList>
    </citation>
    <scope>FUNCTION</scope>
    <scope>CATALYTIC ACTIVITY</scope>
    <scope>SUBCELLULAR LOCATION</scope>
    <scope>DISRUPTION PHENOTYPE</scope>
</reference>
<reference key="16">
    <citation type="journal article" date="2022" name="Proc. Natl. Acad. Sci. U.S.A.">
        <title>Pseudouridine synthase 7 is an opportunistic enzyme that binds and modifies substrates with diverse sequences and structures.</title>
        <authorList>
            <person name="Purchal M.K."/>
            <person name="Eyler D.E."/>
            <person name="Tardu M."/>
            <person name="Franco M.K."/>
            <person name="Korn M.M."/>
            <person name="Khan T."/>
            <person name="McNassor R."/>
            <person name="Giles R."/>
            <person name="Lev K."/>
            <person name="Sharma H."/>
            <person name="Monroe J."/>
            <person name="Mallik L."/>
            <person name="Koutmos M."/>
            <person name="Koutmou K.S."/>
        </authorList>
    </citation>
    <scope>X-RAY CRYSTALLOGRAPHY (3.20 ANGSTROMS)</scope>
    <scope>FUNCTION</scope>
    <scope>CATALYTIC ACTIVITY</scope>
    <scope>ACTIVE SITE</scope>
    <scope>MUTAGENESIS OF LYS-61; PHE-67; GLU-71; HIS-161; ASP-256; ASN-305 AND PHE-307</scope>
</reference>
<feature type="initiator methionine" description="Removed" evidence="20">
    <location>
        <position position="1"/>
    </location>
</feature>
<feature type="chain" id="PRO_0000152561" description="Multisubstrate pseudouridine synthase 7">
    <location>
        <begin position="2"/>
        <end position="676"/>
    </location>
</feature>
<feature type="domain" description="TRUD" evidence="1">
    <location>
        <begin position="338"/>
        <end position="582"/>
    </location>
</feature>
<feature type="region of interest" description="Disordered" evidence="2">
    <location>
        <begin position="1"/>
        <end position="27"/>
    </location>
</feature>
<feature type="region of interest" description="Disordered" evidence="2">
    <location>
        <begin position="87"/>
        <end position="110"/>
    </location>
</feature>
<feature type="compositionally biased region" description="Basic and acidic residues" evidence="2">
    <location>
        <begin position="94"/>
        <end position="110"/>
    </location>
</feature>
<feature type="active site" description="Nucleophile" evidence="17 18">
    <location>
        <position position="256"/>
    </location>
</feature>
<feature type="modified residue" description="N-acetylserine" evidence="20">
    <location>
        <position position="2"/>
    </location>
</feature>
<feature type="mutagenesis site" description="Decreased pseudouridylate synthase activity." evidence="14">
    <original>K</original>
    <variation>A</variation>
    <location>
        <position position="61"/>
    </location>
</feature>
<feature type="mutagenesis site" description="Decreased pseudouridylate synthase activity." evidence="14">
    <original>F</original>
    <variation>A</variation>
    <location>
        <position position="67"/>
    </location>
</feature>
<feature type="mutagenesis site" description="Decreased pseudouridylate synthase activity." evidence="14">
    <original>E</original>
    <variation>A</variation>
    <location>
        <position position="71"/>
    </location>
</feature>
<feature type="mutagenesis site" description="Does not affect pseudouridylate synthase activity." evidence="14">
    <original>H</original>
    <variation>A</variation>
    <location>
        <position position="161"/>
    </location>
</feature>
<feature type="mutagenesis site" description="Abolishes pseudouridylate synthase activity." evidence="5 14">
    <original>D</original>
    <variation>A</variation>
    <location>
        <position position="256"/>
    </location>
</feature>
<feature type="mutagenesis site" description="Strongly decreased pseudouridylate synthase activity." evidence="14">
    <original>N</original>
    <variation>A</variation>
    <location>
        <position position="305"/>
    </location>
</feature>
<feature type="mutagenesis site" description="Strongly decreased pseudouridylate synthase activity." evidence="14">
    <original>F</original>
    <variation>A</variation>
    <variation>Y</variation>
    <location>
        <position position="307"/>
    </location>
</feature>
<feature type="helix" evidence="21">
    <location>
        <begin position="41"/>
        <end position="43"/>
    </location>
</feature>
<feature type="strand" evidence="21">
    <location>
        <begin position="57"/>
        <end position="59"/>
    </location>
</feature>
<feature type="helix" evidence="21">
    <location>
        <begin position="64"/>
        <end position="66"/>
    </location>
</feature>
<feature type="strand" evidence="21">
    <location>
        <begin position="67"/>
        <end position="72"/>
    </location>
</feature>
<feature type="strand" evidence="21">
    <location>
        <begin position="74"/>
        <end position="76"/>
    </location>
</feature>
<feature type="helix" evidence="21">
    <location>
        <begin position="96"/>
        <end position="112"/>
    </location>
</feature>
<feature type="helix" evidence="21">
    <location>
        <begin position="117"/>
        <end position="126"/>
    </location>
</feature>
<feature type="helix" evidence="21">
    <location>
        <begin position="129"/>
        <end position="140"/>
    </location>
</feature>
<feature type="helix" evidence="21">
    <location>
        <begin position="154"/>
        <end position="156"/>
    </location>
</feature>
<feature type="helix" evidence="21">
    <location>
        <begin position="159"/>
        <end position="165"/>
    </location>
</feature>
<feature type="strand" evidence="21">
    <location>
        <begin position="168"/>
        <end position="170"/>
    </location>
</feature>
<feature type="strand" evidence="21">
    <location>
        <begin position="185"/>
        <end position="188"/>
    </location>
</feature>
<feature type="strand" evidence="21">
    <location>
        <begin position="190"/>
        <end position="195"/>
    </location>
</feature>
<feature type="helix" evidence="21">
    <location>
        <begin position="199"/>
        <end position="202"/>
    </location>
</feature>
<feature type="strand" evidence="21">
    <location>
        <begin position="218"/>
        <end position="228"/>
    </location>
</feature>
<feature type="helix" evidence="21">
    <location>
        <begin position="231"/>
        <end position="241"/>
    </location>
</feature>
<feature type="strand" evidence="21">
    <location>
        <begin position="248"/>
        <end position="252"/>
    </location>
</feature>
<feature type="strand" evidence="21">
    <location>
        <begin position="257"/>
        <end position="262"/>
    </location>
</feature>
<feature type="strand" evidence="21">
    <location>
        <begin position="264"/>
        <end position="269"/>
    </location>
</feature>
<feature type="helix" evidence="21">
    <location>
        <begin position="272"/>
        <end position="277"/>
    </location>
</feature>
<feature type="helix" evidence="21">
    <location>
        <begin position="278"/>
        <end position="280"/>
    </location>
</feature>
<feature type="strand" evidence="21">
    <location>
        <begin position="283"/>
        <end position="294"/>
    </location>
</feature>
<feature type="strand" evidence="21">
    <location>
        <begin position="303"/>
        <end position="315"/>
    </location>
</feature>
<feature type="helix" evidence="21">
    <location>
        <begin position="323"/>
        <end position="336"/>
    </location>
</feature>
<feature type="helix" evidence="21">
    <location>
        <begin position="345"/>
        <end position="347"/>
    </location>
</feature>
<feature type="strand" evidence="21">
    <location>
        <begin position="350"/>
        <end position="353"/>
    </location>
</feature>
<feature type="helix" evidence="21">
    <location>
        <begin position="355"/>
        <end position="363"/>
    </location>
</feature>
<feature type="helix" evidence="21">
    <location>
        <begin position="367"/>
        <end position="375"/>
    </location>
</feature>
<feature type="helix" evidence="21">
    <location>
        <begin position="388"/>
        <end position="394"/>
    </location>
</feature>
<feature type="helix" evidence="21">
    <location>
        <begin position="398"/>
        <end position="402"/>
    </location>
</feature>
<feature type="helix" evidence="21">
    <location>
        <begin position="416"/>
        <end position="420"/>
    </location>
</feature>
<feature type="turn" evidence="21">
    <location>
        <begin position="425"/>
        <end position="428"/>
    </location>
</feature>
<feature type="helix" evidence="21">
    <location>
        <begin position="432"/>
        <end position="439"/>
    </location>
</feature>
<feature type="helix" evidence="21">
    <location>
        <begin position="444"/>
        <end position="469"/>
    </location>
</feature>
<feature type="strand" evidence="21">
    <location>
        <begin position="479"/>
        <end position="481"/>
    </location>
</feature>
<feature type="strand" evidence="21">
    <location>
        <begin position="510"/>
        <end position="512"/>
    </location>
</feature>
<feature type="helix" evidence="21">
    <location>
        <begin position="515"/>
        <end position="519"/>
    </location>
</feature>
<feature type="helix" evidence="21">
    <location>
        <begin position="525"/>
        <end position="527"/>
    </location>
</feature>
<feature type="strand" evidence="21">
    <location>
        <begin position="529"/>
        <end position="531"/>
    </location>
</feature>
<feature type="helix" evidence="21">
    <location>
        <begin position="543"/>
        <end position="555"/>
    </location>
</feature>
<feature type="strand" evidence="21">
    <location>
        <begin position="560"/>
        <end position="562"/>
    </location>
</feature>
<feature type="strand" evidence="21">
    <location>
        <begin position="566"/>
        <end position="568"/>
    </location>
</feature>
<feature type="strand" evidence="21">
    <location>
        <begin position="576"/>
        <end position="581"/>
    </location>
</feature>
<feature type="strand" evidence="21">
    <location>
        <begin position="584"/>
        <end position="594"/>
    </location>
</feature>
<feature type="strand" evidence="21">
    <location>
        <begin position="596"/>
        <end position="598"/>
    </location>
</feature>
<feature type="helix" evidence="21">
    <location>
        <begin position="604"/>
        <end position="616"/>
    </location>
</feature>
<feature type="helix" evidence="21">
    <location>
        <begin position="622"/>
        <end position="624"/>
    </location>
</feature>
<feature type="strand" evidence="21">
    <location>
        <begin position="626"/>
        <end position="628"/>
    </location>
</feature>
<feature type="strand" evidence="21">
    <location>
        <begin position="635"/>
        <end position="648"/>
    </location>
</feature>
<feature type="helix" evidence="21">
    <location>
        <begin position="651"/>
        <end position="659"/>
    </location>
</feature>